<organism>
    <name type="scientific">Yarrowia lipolytica (strain CLIB 122 / E 150)</name>
    <name type="common">Yeast</name>
    <name type="synonym">Candida lipolytica</name>
    <dbReference type="NCBI Taxonomy" id="284591"/>
    <lineage>
        <taxon>Eukaryota</taxon>
        <taxon>Fungi</taxon>
        <taxon>Dikarya</taxon>
        <taxon>Ascomycota</taxon>
        <taxon>Saccharomycotina</taxon>
        <taxon>Dipodascomycetes</taxon>
        <taxon>Dipodascales</taxon>
        <taxon>Dipodascales incertae sedis</taxon>
        <taxon>Yarrowia</taxon>
    </lineage>
</organism>
<comment type="function">
    <text evidence="1">Histones H3 and H4 chaperone involved in the nucleosome formation and heterochromatin silencing. Required for the deposition of H3K56ac-carrying H3-H4 complex onto newly-replicated DNA. Plays a role in the transcriptional regulation of the cell-cycle dependent histone genes by creating a repressive structure at the core histone gene promoter (By similarity).</text>
</comment>
<comment type="subunit">
    <text evidence="1">Interacts with histones H3 and H4.</text>
</comment>
<comment type="subcellular location">
    <subcellularLocation>
        <location evidence="1">Nucleus</location>
    </subcellularLocation>
    <subcellularLocation>
        <location evidence="1">Chromosome</location>
    </subcellularLocation>
</comment>
<comment type="similarity">
    <text evidence="3">Belongs to the RTT106 family.</text>
</comment>
<accession>Q6CHJ8</accession>
<dbReference type="EMBL" id="CR382127">
    <property type="protein sequence ID" value="CAG83789.1"/>
    <property type="molecule type" value="Genomic_DNA"/>
</dbReference>
<dbReference type="RefSeq" id="XP_499863.1">
    <property type="nucleotide sequence ID" value="XM_499863.1"/>
</dbReference>
<dbReference type="SMR" id="Q6CHJ8"/>
<dbReference type="FunCoup" id="Q6CHJ8">
    <property type="interactions" value="131"/>
</dbReference>
<dbReference type="STRING" id="284591.Q6CHJ8"/>
<dbReference type="EnsemblFungi" id="CAG83789">
    <property type="protein sequence ID" value="CAG83789"/>
    <property type="gene ID" value="YALI0_A08107g"/>
</dbReference>
<dbReference type="KEGG" id="yli:2905872"/>
<dbReference type="VEuPathDB" id="FungiDB:YALI0_A08107g"/>
<dbReference type="HOGENOM" id="CLU_040939_1_0_1"/>
<dbReference type="InParanoid" id="Q6CHJ8"/>
<dbReference type="OrthoDB" id="115294at4891"/>
<dbReference type="Proteomes" id="UP000001300">
    <property type="component" value="Chromosome A"/>
</dbReference>
<dbReference type="GO" id="GO:0005694">
    <property type="term" value="C:chromosome"/>
    <property type="evidence" value="ECO:0007669"/>
    <property type="project" value="UniProtKB-SubCell"/>
</dbReference>
<dbReference type="GO" id="GO:0005634">
    <property type="term" value="C:nucleus"/>
    <property type="evidence" value="ECO:0007669"/>
    <property type="project" value="UniProtKB-SubCell"/>
</dbReference>
<dbReference type="GO" id="GO:0003677">
    <property type="term" value="F:DNA binding"/>
    <property type="evidence" value="ECO:0007669"/>
    <property type="project" value="UniProtKB-KW"/>
</dbReference>
<dbReference type="GO" id="GO:0042393">
    <property type="term" value="F:histone binding"/>
    <property type="evidence" value="ECO:0000318"/>
    <property type="project" value="GO_Central"/>
</dbReference>
<dbReference type="GO" id="GO:0031491">
    <property type="term" value="F:nucleosome binding"/>
    <property type="evidence" value="ECO:0000318"/>
    <property type="project" value="GO_Central"/>
</dbReference>
<dbReference type="CDD" id="cd13304">
    <property type="entry name" value="PH2-like_Rtt106"/>
    <property type="match status" value="1"/>
</dbReference>
<dbReference type="Gene3D" id="2.30.29.120">
    <property type="match status" value="1"/>
</dbReference>
<dbReference type="Gene3D" id="2.30.29.30">
    <property type="entry name" value="Pleckstrin-homology domain (PH domain)/Phosphotyrosine-binding domain (PTB)"/>
    <property type="match status" value="1"/>
</dbReference>
<dbReference type="InterPro" id="IPR011993">
    <property type="entry name" value="PH-like_dom_sf"/>
</dbReference>
<dbReference type="InterPro" id="IPR013719">
    <property type="entry name" value="RTT106/SPT16-like_middle_dom"/>
</dbReference>
<dbReference type="InterPro" id="IPR050454">
    <property type="entry name" value="RTT106/SSRP1_HistChap/FACT"/>
</dbReference>
<dbReference type="PANTHER" id="PTHR45849">
    <property type="entry name" value="FACT COMPLEX SUBUNIT SSRP1"/>
    <property type="match status" value="1"/>
</dbReference>
<dbReference type="PANTHER" id="PTHR45849:SF3">
    <property type="entry name" value="HISTONE CHAPERONE RTT106"/>
    <property type="match status" value="1"/>
</dbReference>
<dbReference type="Pfam" id="PF08512">
    <property type="entry name" value="Rttp106-like_middle"/>
    <property type="match status" value="1"/>
</dbReference>
<dbReference type="SMART" id="SM01287">
    <property type="entry name" value="Rtt106"/>
    <property type="match status" value="1"/>
</dbReference>
<dbReference type="SUPFAM" id="SSF50729">
    <property type="entry name" value="PH domain-like"/>
    <property type="match status" value="1"/>
</dbReference>
<feature type="chain" id="PRO_0000320501" description="Histone chaperone RTT106">
    <location>
        <begin position="1"/>
        <end position="399"/>
    </location>
</feature>
<feature type="region of interest" description="Disordered" evidence="2">
    <location>
        <begin position="331"/>
        <end position="399"/>
    </location>
</feature>
<feature type="compositionally biased region" description="Acidic residues" evidence="2">
    <location>
        <begin position="343"/>
        <end position="354"/>
    </location>
</feature>
<feature type="compositionally biased region" description="Acidic residues" evidence="2">
    <location>
        <begin position="363"/>
        <end position="399"/>
    </location>
</feature>
<keyword id="KW-0143">Chaperone</keyword>
<keyword id="KW-0158">Chromosome</keyword>
<keyword id="KW-0238">DNA-binding</keyword>
<keyword id="KW-0539">Nucleus</keyword>
<keyword id="KW-1185">Reference proteome</keyword>
<keyword id="KW-0804">Transcription</keyword>
<keyword id="KW-0805">Transcription regulation</keyword>
<reference key="1">
    <citation type="journal article" date="2004" name="Nature">
        <title>Genome evolution in yeasts.</title>
        <authorList>
            <person name="Dujon B."/>
            <person name="Sherman D."/>
            <person name="Fischer G."/>
            <person name="Durrens P."/>
            <person name="Casaregola S."/>
            <person name="Lafontaine I."/>
            <person name="de Montigny J."/>
            <person name="Marck C."/>
            <person name="Neuveglise C."/>
            <person name="Talla E."/>
            <person name="Goffard N."/>
            <person name="Frangeul L."/>
            <person name="Aigle M."/>
            <person name="Anthouard V."/>
            <person name="Babour A."/>
            <person name="Barbe V."/>
            <person name="Barnay S."/>
            <person name="Blanchin S."/>
            <person name="Beckerich J.-M."/>
            <person name="Beyne E."/>
            <person name="Bleykasten C."/>
            <person name="Boisrame A."/>
            <person name="Boyer J."/>
            <person name="Cattolico L."/>
            <person name="Confanioleri F."/>
            <person name="de Daruvar A."/>
            <person name="Despons L."/>
            <person name="Fabre E."/>
            <person name="Fairhead C."/>
            <person name="Ferry-Dumazet H."/>
            <person name="Groppi A."/>
            <person name="Hantraye F."/>
            <person name="Hennequin C."/>
            <person name="Jauniaux N."/>
            <person name="Joyet P."/>
            <person name="Kachouri R."/>
            <person name="Kerrest A."/>
            <person name="Koszul R."/>
            <person name="Lemaire M."/>
            <person name="Lesur I."/>
            <person name="Ma L."/>
            <person name="Muller H."/>
            <person name="Nicaud J.-M."/>
            <person name="Nikolski M."/>
            <person name="Oztas S."/>
            <person name="Ozier-Kalogeropoulos O."/>
            <person name="Pellenz S."/>
            <person name="Potier S."/>
            <person name="Richard G.-F."/>
            <person name="Straub M.-L."/>
            <person name="Suleau A."/>
            <person name="Swennen D."/>
            <person name="Tekaia F."/>
            <person name="Wesolowski-Louvel M."/>
            <person name="Westhof E."/>
            <person name="Wirth B."/>
            <person name="Zeniou-Meyer M."/>
            <person name="Zivanovic Y."/>
            <person name="Bolotin-Fukuhara M."/>
            <person name="Thierry A."/>
            <person name="Bouchier C."/>
            <person name="Caudron B."/>
            <person name="Scarpelli C."/>
            <person name="Gaillardin C."/>
            <person name="Weissenbach J."/>
            <person name="Wincker P."/>
            <person name="Souciet J.-L."/>
        </authorList>
    </citation>
    <scope>NUCLEOTIDE SEQUENCE [LARGE SCALE GENOMIC DNA]</scope>
    <source>
        <strain>CLIB 122 / E 150</strain>
    </source>
</reference>
<proteinExistence type="inferred from homology"/>
<evidence type="ECO:0000250" key="1"/>
<evidence type="ECO:0000256" key="2">
    <source>
        <dbReference type="SAM" id="MobiDB-lite"/>
    </source>
</evidence>
<evidence type="ECO:0000305" key="3"/>
<gene>
    <name type="primary">RTT106</name>
    <name type="ordered locus">YALI0A08107g</name>
</gene>
<protein>
    <recommendedName>
        <fullName>Histone chaperone RTT106</fullName>
    </recommendedName>
</protein>
<name>RT106_YARLI</name>
<sequence>MYQPPRPFELPSDLAAGITSLYRENADAKVIIDSLVKLAYDSGKEQSELVHKKAKVDGPPATLSESIVSKLKIFLGINQVSVVLPIRKKLNVFIGADPRGKTWVWVSSKEDGSVDDMYPATDTADFRCVACLPVPDRSGTPLFNIVFVPGGAAQEVTTPPQPLVFSVPEEPAKKAFDGSLFLQGKDKNQFMYKDLILLGCQGISLPISVPDTEIFGEKFHVLAHKGAREGYLFFMQNEVIFGFKKPLLCMNTEDIESISFSTITRLTFNINIVLKSAPDVAMEFSLIDQSHYGEIAGFMERIAVKNESFDDKLKAKTFMKNQQPDNILAVAQNEAENEVPVAYDDEDEEDDENYTGESSASDGDADESDEEEAEEMEEQEREYDEELGDDEVEHDEDLG</sequence>